<keyword id="KW-0066">ATP synthesis</keyword>
<keyword id="KW-0067">ATP-binding</keyword>
<keyword id="KW-0375">Hydrogen ion transport</keyword>
<keyword id="KW-0406">Ion transport</keyword>
<keyword id="KW-0547">Nucleotide-binding</keyword>
<keyword id="KW-1185">Reference proteome</keyword>
<keyword id="KW-1278">Translocase</keyword>
<keyword id="KW-0813">Transport</keyword>
<comment type="function">
    <text evidence="1">Produces ATP from ADP in the presence of a proton gradient across the membrane. The V-type alpha chain is a catalytic subunit.</text>
</comment>
<comment type="catalytic activity">
    <reaction evidence="1">
        <text>ATP + H2O + 4 H(+)(in) = ADP + phosphate + 5 H(+)(out)</text>
        <dbReference type="Rhea" id="RHEA:57720"/>
        <dbReference type="ChEBI" id="CHEBI:15377"/>
        <dbReference type="ChEBI" id="CHEBI:15378"/>
        <dbReference type="ChEBI" id="CHEBI:30616"/>
        <dbReference type="ChEBI" id="CHEBI:43474"/>
        <dbReference type="ChEBI" id="CHEBI:456216"/>
        <dbReference type="EC" id="7.1.2.2"/>
    </reaction>
</comment>
<comment type="similarity">
    <text evidence="1">Belongs to the ATPase alpha/beta chains family.</text>
</comment>
<feature type="chain" id="PRO_1000115648" description="V-type ATP synthase alpha chain">
    <location>
        <begin position="1"/>
        <end position="590"/>
    </location>
</feature>
<feature type="binding site" evidence="1">
    <location>
        <begin position="232"/>
        <end position="239"/>
    </location>
    <ligand>
        <name>ATP</name>
        <dbReference type="ChEBI" id="CHEBI:30616"/>
    </ligand>
</feature>
<protein>
    <recommendedName>
        <fullName evidence="1">V-type ATP synthase alpha chain</fullName>
        <ecNumber evidence="1">7.1.2.2</ecNumber>
    </recommendedName>
    <alternativeName>
        <fullName evidence="1">V-ATPase subunit A</fullName>
    </alternativeName>
</protein>
<name>VATA_THEP3</name>
<proteinExistence type="inferred from homology"/>
<gene>
    <name evidence="1" type="primary">atpA</name>
    <name type="ordered locus">Teth39_2259</name>
</gene>
<dbReference type="EC" id="7.1.2.2" evidence="1"/>
<dbReference type="EMBL" id="CP000924">
    <property type="protein sequence ID" value="ABY95880.1"/>
    <property type="molecule type" value="Genomic_DNA"/>
</dbReference>
<dbReference type="RefSeq" id="WP_012269821.1">
    <property type="nucleotide sequence ID" value="NC_010321.1"/>
</dbReference>
<dbReference type="SMR" id="B0K8E8"/>
<dbReference type="STRING" id="340099.Teth39_2259"/>
<dbReference type="KEGG" id="tpd:Teth39_2259"/>
<dbReference type="eggNOG" id="COG1155">
    <property type="taxonomic scope" value="Bacteria"/>
</dbReference>
<dbReference type="HOGENOM" id="CLU_008162_3_1_9"/>
<dbReference type="Proteomes" id="UP000002156">
    <property type="component" value="Chromosome"/>
</dbReference>
<dbReference type="GO" id="GO:0045259">
    <property type="term" value="C:proton-transporting ATP synthase complex"/>
    <property type="evidence" value="ECO:0007669"/>
    <property type="project" value="UniProtKB-ARBA"/>
</dbReference>
<dbReference type="GO" id="GO:0033178">
    <property type="term" value="C:proton-transporting two-sector ATPase complex, catalytic domain"/>
    <property type="evidence" value="ECO:0007669"/>
    <property type="project" value="InterPro"/>
</dbReference>
<dbReference type="GO" id="GO:0005524">
    <property type="term" value="F:ATP binding"/>
    <property type="evidence" value="ECO:0007669"/>
    <property type="project" value="UniProtKB-UniRule"/>
</dbReference>
<dbReference type="GO" id="GO:0016887">
    <property type="term" value="F:ATP hydrolysis activity"/>
    <property type="evidence" value="ECO:0007669"/>
    <property type="project" value="InterPro"/>
</dbReference>
<dbReference type="GO" id="GO:0046933">
    <property type="term" value="F:proton-transporting ATP synthase activity, rotational mechanism"/>
    <property type="evidence" value="ECO:0007669"/>
    <property type="project" value="UniProtKB-UniRule"/>
</dbReference>
<dbReference type="GO" id="GO:0046961">
    <property type="term" value="F:proton-transporting ATPase activity, rotational mechanism"/>
    <property type="evidence" value="ECO:0007669"/>
    <property type="project" value="InterPro"/>
</dbReference>
<dbReference type="GO" id="GO:0042777">
    <property type="term" value="P:proton motive force-driven plasma membrane ATP synthesis"/>
    <property type="evidence" value="ECO:0007669"/>
    <property type="project" value="UniProtKB-UniRule"/>
</dbReference>
<dbReference type="CDD" id="cd18111">
    <property type="entry name" value="ATP-synt_V_A-type_alpha_C"/>
    <property type="match status" value="1"/>
</dbReference>
<dbReference type="CDD" id="cd18119">
    <property type="entry name" value="ATP-synt_V_A-type_alpha_N"/>
    <property type="match status" value="1"/>
</dbReference>
<dbReference type="CDD" id="cd01134">
    <property type="entry name" value="V_A-ATPase_A"/>
    <property type="match status" value="1"/>
</dbReference>
<dbReference type="FunFam" id="3.40.50.300:FF:000675">
    <property type="entry name" value="V-type ATP synthase alpha chain"/>
    <property type="match status" value="1"/>
</dbReference>
<dbReference type="FunFam" id="1.10.1140.10:FF:000002">
    <property type="entry name" value="V-type proton ATPase catalytic subunit A"/>
    <property type="match status" value="1"/>
</dbReference>
<dbReference type="FunFam" id="2.40.30.20:FF:000002">
    <property type="entry name" value="V-type proton ATPase catalytic subunit A"/>
    <property type="match status" value="1"/>
</dbReference>
<dbReference type="FunFam" id="2.40.50.100:FF:000008">
    <property type="entry name" value="V-type proton ATPase catalytic subunit A"/>
    <property type="match status" value="1"/>
</dbReference>
<dbReference type="Gene3D" id="2.40.30.20">
    <property type="match status" value="1"/>
</dbReference>
<dbReference type="Gene3D" id="2.40.50.100">
    <property type="match status" value="1"/>
</dbReference>
<dbReference type="Gene3D" id="1.10.1140.10">
    <property type="entry name" value="Bovine Mitochondrial F1-atpase, Atp Synthase Beta Chain, Chain D, domain 3"/>
    <property type="match status" value="1"/>
</dbReference>
<dbReference type="Gene3D" id="3.40.50.300">
    <property type="entry name" value="P-loop containing nucleotide triphosphate hydrolases"/>
    <property type="match status" value="1"/>
</dbReference>
<dbReference type="HAMAP" id="MF_00309">
    <property type="entry name" value="ATP_synth_A_arch"/>
    <property type="match status" value="1"/>
</dbReference>
<dbReference type="InterPro" id="IPR003593">
    <property type="entry name" value="AAA+_ATPase"/>
</dbReference>
<dbReference type="InterPro" id="IPR055190">
    <property type="entry name" value="ATP-synt_VA_C"/>
</dbReference>
<dbReference type="InterPro" id="IPR031686">
    <property type="entry name" value="ATP-synth_a_Xtn"/>
</dbReference>
<dbReference type="InterPro" id="IPR023366">
    <property type="entry name" value="ATP_synth_asu-like_sf"/>
</dbReference>
<dbReference type="InterPro" id="IPR005726">
    <property type="entry name" value="ATP_synth_asu_arc"/>
</dbReference>
<dbReference type="InterPro" id="IPR020003">
    <property type="entry name" value="ATPase_a/bsu_AS"/>
</dbReference>
<dbReference type="InterPro" id="IPR004100">
    <property type="entry name" value="ATPase_F1/V1/A1_a/bsu_N"/>
</dbReference>
<dbReference type="InterPro" id="IPR036121">
    <property type="entry name" value="ATPase_F1/V1/A1_a/bsu_N_sf"/>
</dbReference>
<dbReference type="InterPro" id="IPR000194">
    <property type="entry name" value="ATPase_F1/V1/A1_a/bsu_nucl-bd"/>
</dbReference>
<dbReference type="InterPro" id="IPR024034">
    <property type="entry name" value="ATPase_F1/V1_b/a_C"/>
</dbReference>
<dbReference type="InterPro" id="IPR027417">
    <property type="entry name" value="P-loop_NTPase"/>
</dbReference>
<dbReference type="InterPro" id="IPR022878">
    <property type="entry name" value="V-ATPase_asu"/>
</dbReference>
<dbReference type="NCBIfam" id="TIGR01043">
    <property type="entry name" value="ATP_syn_A_arch"/>
    <property type="match status" value="1"/>
</dbReference>
<dbReference type="NCBIfam" id="NF003220">
    <property type="entry name" value="PRK04192.1"/>
    <property type="match status" value="1"/>
</dbReference>
<dbReference type="PANTHER" id="PTHR43607:SF1">
    <property type="entry name" value="H(+)-TRANSPORTING TWO-SECTOR ATPASE"/>
    <property type="match status" value="1"/>
</dbReference>
<dbReference type="PANTHER" id="PTHR43607">
    <property type="entry name" value="V-TYPE PROTON ATPASE CATALYTIC SUBUNIT A"/>
    <property type="match status" value="1"/>
</dbReference>
<dbReference type="Pfam" id="PF00006">
    <property type="entry name" value="ATP-synt_ab"/>
    <property type="match status" value="1"/>
</dbReference>
<dbReference type="Pfam" id="PF02874">
    <property type="entry name" value="ATP-synt_ab_N"/>
    <property type="match status" value="1"/>
</dbReference>
<dbReference type="Pfam" id="PF16886">
    <property type="entry name" value="ATP-synt_ab_Xtn"/>
    <property type="match status" value="1"/>
</dbReference>
<dbReference type="Pfam" id="PF22919">
    <property type="entry name" value="ATP-synt_VA_C"/>
    <property type="match status" value="1"/>
</dbReference>
<dbReference type="SMART" id="SM00382">
    <property type="entry name" value="AAA"/>
    <property type="match status" value="1"/>
</dbReference>
<dbReference type="SUPFAM" id="SSF47917">
    <property type="entry name" value="C-terminal domain of alpha and beta subunits of F1 ATP synthase"/>
    <property type="match status" value="1"/>
</dbReference>
<dbReference type="SUPFAM" id="SSF50615">
    <property type="entry name" value="N-terminal domain of alpha and beta subunits of F1 ATP synthase"/>
    <property type="match status" value="1"/>
</dbReference>
<dbReference type="SUPFAM" id="SSF52540">
    <property type="entry name" value="P-loop containing nucleoside triphosphate hydrolases"/>
    <property type="match status" value="1"/>
</dbReference>
<dbReference type="PROSITE" id="PS00152">
    <property type="entry name" value="ATPASE_ALPHA_BETA"/>
    <property type="match status" value="1"/>
</dbReference>
<evidence type="ECO:0000255" key="1">
    <source>
        <dbReference type="HAMAP-Rule" id="MF_00309"/>
    </source>
</evidence>
<organism>
    <name type="scientific">Thermoanaerobacter pseudethanolicus (strain ATCC 33223 / 39E)</name>
    <name type="common">Clostridium thermohydrosulfuricum</name>
    <dbReference type="NCBI Taxonomy" id="340099"/>
    <lineage>
        <taxon>Bacteria</taxon>
        <taxon>Bacillati</taxon>
        <taxon>Bacillota</taxon>
        <taxon>Clostridia</taxon>
        <taxon>Thermoanaerobacterales</taxon>
        <taxon>Thermoanaerobacteraceae</taxon>
        <taxon>Thermoanaerobacter</taxon>
    </lineage>
</organism>
<reference key="1">
    <citation type="submission" date="2008-01" db="EMBL/GenBank/DDBJ databases">
        <title>Complete sequence of Thermoanaerobacter pseudethanolicus 39E.</title>
        <authorList>
            <person name="Copeland A."/>
            <person name="Lucas S."/>
            <person name="Lapidus A."/>
            <person name="Barry K."/>
            <person name="Glavina del Rio T."/>
            <person name="Dalin E."/>
            <person name="Tice H."/>
            <person name="Pitluck S."/>
            <person name="Bruce D."/>
            <person name="Goodwin L."/>
            <person name="Saunders E."/>
            <person name="Brettin T."/>
            <person name="Detter J.C."/>
            <person name="Han C."/>
            <person name="Schmutz J."/>
            <person name="Larimer F."/>
            <person name="Land M."/>
            <person name="Hauser L."/>
            <person name="Kyrpides N."/>
            <person name="Lykidis A."/>
            <person name="Hemme C."/>
            <person name="Fields M.W."/>
            <person name="He Z."/>
            <person name="Zhou J."/>
            <person name="Richardson P."/>
        </authorList>
    </citation>
    <scope>NUCLEOTIDE SEQUENCE [LARGE SCALE GENOMIC DNA]</scope>
    <source>
        <strain>ATCC 33223 / DSM 2355 / 39E</strain>
    </source>
</reference>
<accession>B0K8E8</accession>
<sequence>MSQGIITKVSGPLVVAEGLPEAKMFDVVKVGNQGLIGEIIEIRGERVSIQVYEETSGLGPGDPVVSTGEPLSVELGPGMLEGIFDGIQRPLDVIEKKVGSFITRGIDVPSLNREKKWKFTPKVKSGDKVSGGDIIGTVQETVIVEHRIMVPPAISGIVEDIREGEYTVTEPIARIKTDSGQIVEITMMQKWPVRKARPYKEKLPPEIPMPTGQRVIDTLFPVTKGGTACIPGPFGSGKTVVQHQLAKWADAEIVVYIGCGERGNEMTDVLLEFPELKDPKTEEPLMKRTVLIANTSNMPVAAREASIYTGITIAEYFRDMGYSVALMADSTSRWAEALREMSGRLEEMPGEEGYPAYLARRLAEFYERAGRVICLGSDNREGALTVVGAVSPPGGDLSEPVTQATLRVVKVFWALDSELAYARHFPAINWLTSYSLYSDVVEDYMNKNVSSDWGELRSEAMRLLQEEASLQEIVRLVGIDALSTRDRLVLEVARSIREDFLHQNAFHEVDTYSSMEKQYRMLKLIMIFYQEAQKALEKGVPFSEIEKHPVREKIARAKYVEESKLTVFDEIEKEIKKAMQGLIEGGAADA</sequence>